<feature type="chain" id="PRO_0000053390" description="Neuroglobin">
    <location>
        <begin position="1"/>
        <end position="151"/>
    </location>
</feature>
<feature type="domain" description="Globin" evidence="2">
    <location>
        <begin position="1"/>
        <end position="149"/>
    </location>
</feature>
<feature type="binding site" description="distal binding residue; reversible" evidence="2 6 11 15 16">
    <location>
        <position position="64"/>
    </location>
    <ligand>
        <name>heme b</name>
        <dbReference type="ChEBI" id="CHEBI:60344"/>
    </ligand>
    <ligandPart>
        <name>Fe</name>
        <dbReference type="ChEBI" id="CHEBI:18248"/>
    </ligandPart>
</feature>
<feature type="binding site" description="proximal binding residue" evidence="6 11 15 16">
    <location>
        <position position="96"/>
    </location>
    <ligand>
        <name>heme b</name>
        <dbReference type="ChEBI" id="CHEBI:60344"/>
    </ligand>
    <ligandPart>
        <name>Fe</name>
        <dbReference type="ChEBI" id="CHEBI:18248"/>
    </ligandPart>
</feature>
<feature type="disulfide bond" description="Redox-active" evidence="2 5 7 9 11 16">
    <location>
        <begin position="46"/>
        <end position="55"/>
    </location>
</feature>
<feature type="mutagenesis site" description="No effect on interaction with 14-3-3 proteins." evidence="10">
    <original>S</original>
    <variation>A</variation>
    <location>
        <position position="17"/>
    </location>
</feature>
<feature type="mutagenesis site" description="Decreased nitrite reductase activity." evidence="9">
    <original>C</original>
    <variation>A</variation>
    <location>
        <position position="46"/>
    </location>
</feature>
<feature type="mutagenesis site" description="Loss of intramolecular disulfide bond." evidence="5">
    <original>C</original>
    <variation>S</variation>
    <location>
        <position position="46"/>
    </location>
</feature>
<feature type="mutagenesis site" description="Decreased interaction with 14-3-3 proteins." evidence="10">
    <original>S</original>
    <variation>A</variation>
    <location>
        <position position="50"/>
    </location>
</feature>
<feature type="mutagenesis site" description="Decreased affinity for nitrite. Decreased nitrite reductase activity." evidence="9">
    <original>C</original>
    <variation>A</variation>
    <location>
        <position position="55"/>
    </location>
</feature>
<feature type="mutagenesis site" description="Loss of intramolecular disulfide bond." evidence="5">
    <original>C</original>
    <variation>S</variation>
    <location>
        <position position="55"/>
    </location>
</feature>
<feature type="mutagenesis site" description="Increased nitrite reductase activity." evidence="9">
    <original>H</original>
    <variation>L</variation>
    <variation>Q</variation>
    <location>
        <position position="64"/>
    </location>
</feature>
<feature type="mutagenesis site" description="No effect on disulfide bond." evidence="5">
    <original>C</original>
    <variation>S</variation>
    <location>
        <position position="120"/>
    </location>
</feature>
<feature type="helix" evidence="17">
    <location>
        <begin position="6"/>
        <end position="17"/>
    </location>
</feature>
<feature type="helix" evidence="17">
    <location>
        <begin position="20"/>
        <end position="34"/>
    </location>
</feature>
<feature type="helix" evidence="17">
    <location>
        <begin position="36"/>
        <end position="38"/>
    </location>
</feature>
<feature type="helix" evidence="17">
    <location>
        <begin position="39"/>
        <end position="45"/>
    </location>
</feature>
<feature type="helix" evidence="17">
    <location>
        <begin position="52"/>
        <end position="56"/>
    </location>
</feature>
<feature type="helix" evidence="17">
    <location>
        <begin position="59"/>
        <end position="77"/>
    </location>
</feature>
<feature type="turn" evidence="17">
    <location>
        <begin position="78"/>
        <end position="80"/>
    </location>
</feature>
<feature type="helix" evidence="17">
    <location>
        <begin position="82"/>
        <end position="85"/>
    </location>
</feature>
<feature type="helix" evidence="17">
    <location>
        <begin position="86"/>
        <end position="98"/>
    </location>
</feature>
<feature type="helix" evidence="17">
    <location>
        <begin position="105"/>
        <end position="121"/>
    </location>
</feature>
<feature type="helix" evidence="17">
    <location>
        <begin position="122"/>
        <end position="124"/>
    </location>
</feature>
<feature type="helix" evidence="17">
    <location>
        <begin position="127"/>
        <end position="145"/>
    </location>
</feature>
<comment type="function">
    <text evidence="4 5 6 8 9 11">Monomeric globin with a bis-histidyl six-coordinate heme-iron atom through which it can bind dioxygen, carbon monoxide and nitric oxide (PubMed:11473128, PubMed:12962627, PubMed:24699645). Could help transport oxygen and increase its availability to the metabolically active neuronal tissues, though its low quantity in tissues as well as its high affinity for dioxygen, which may limit its oxygen-releasing ability, argue against it (PubMed:11473128, PubMed:12860983, PubMed:12962627, PubMed:24699645). The ferrous/deoxygenated form exhibits a nitrite reductase activity and it could produce nitric oxide which in turn inhibits cellular respiration in response to hypoxia (PubMed:21296891). In its ferrous/deoxygenated state, it may also exhibit GDI (Guanine nucleotide Dissociation Inhibitor) activity toward heterotrimeric G-alpha proteins, thereby regulating signal transduction to facilitate neuroprotective responses in the wake of hypoxia and associated oxidative stress (PubMed:12860983, PubMed:18302932).</text>
</comment>
<comment type="catalytic activity">
    <reaction evidence="9">
        <text>Fe(III)-heme b-[protein] + nitric oxide + H2O = Fe(II)-heme b-[protein] + nitrite + 2 H(+)</text>
        <dbReference type="Rhea" id="RHEA:77711"/>
        <dbReference type="Rhea" id="RHEA-COMP:18975"/>
        <dbReference type="Rhea" id="RHEA-COMP:18976"/>
        <dbReference type="ChEBI" id="CHEBI:15377"/>
        <dbReference type="ChEBI" id="CHEBI:15378"/>
        <dbReference type="ChEBI" id="CHEBI:16301"/>
        <dbReference type="ChEBI" id="CHEBI:16480"/>
        <dbReference type="ChEBI" id="CHEBI:55376"/>
        <dbReference type="ChEBI" id="CHEBI:60344"/>
    </reaction>
    <physiologicalReaction direction="right-to-left" evidence="13">
        <dbReference type="Rhea" id="RHEA:77713"/>
    </physiologicalReaction>
</comment>
<comment type="subunit">
    <text evidence="1 3 5 10">Monomer (PubMed:11029004). Homodimer and homotetramer; disulfide-linked. Mainly monomeric but also detected as part of homodimers and homotetramers (By similarity). Interacts with 14-3-3 proteins; regulates the phosphorylation of NGB (PubMed:21965683). Could interact (ferrous form) with G-alpha(i) proteins (GTP-bound form) (PubMed:12860983).</text>
</comment>
<comment type="interaction">
    <interactant intactId="EBI-10311409">
        <id>Q9NPG2</id>
    </interactant>
    <interactant intactId="EBI-710091">
        <id>Q9BX70</id>
        <label>BTBD2</label>
    </interactant>
    <organismsDiffer>false</organismsDiffer>
    <experiments>3</experiments>
</comment>
<comment type="interaction">
    <interactant intactId="EBI-10311409">
        <id>Q9NPG2</id>
    </interactant>
    <interactant intactId="EBI-946029">
        <id>Q6P1W5</id>
        <label>C1orf94</label>
    </interactant>
    <organismsDiffer>false</organismsDiffer>
    <experiments>3</experiments>
</comment>
<comment type="interaction">
    <interactant intactId="EBI-10311409">
        <id>Q9NPG2</id>
    </interactant>
    <interactant intactId="EBI-742054">
        <id>Q96D03</id>
        <label>DDIT4L</label>
    </interactant>
    <organismsDiffer>false</organismsDiffer>
    <experiments>3</experiments>
</comment>
<comment type="interaction">
    <interactant intactId="EBI-10311409">
        <id>Q9NPG2</id>
    </interactant>
    <interactant intactId="EBI-923440">
        <id>Q8WXI9</id>
        <label>GATAD2B</label>
    </interactant>
    <organismsDiffer>false</organismsDiffer>
    <experiments>3</experiments>
</comment>
<comment type="interaction">
    <interactant intactId="EBI-10311409">
        <id>Q9NPG2</id>
    </interactant>
    <interactant intactId="EBI-8638439">
        <id>Q8IYA8</id>
        <label>IHO1</label>
    </interactant>
    <organismsDiffer>false</organismsDiffer>
    <experiments>6</experiments>
</comment>
<comment type="interaction">
    <interactant intactId="EBI-10311409">
        <id>Q9NPG2</id>
    </interactant>
    <interactant intactId="EBI-2686809">
        <id>Q96JM7</id>
        <label>L3MBTL3</label>
    </interactant>
    <organismsDiffer>false</organismsDiffer>
    <experiments>3</experiments>
</comment>
<comment type="interaction">
    <interactant intactId="EBI-10311409">
        <id>Q9NPG2</id>
    </interactant>
    <interactant intactId="EBI-11985629">
        <id>Q96JM7-2</id>
        <label>L3MBTL3</label>
    </interactant>
    <organismsDiffer>false</organismsDiffer>
    <experiments>3</experiments>
</comment>
<comment type="interaction">
    <interactant intactId="EBI-10311409">
        <id>Q9NPG2</id>
    </interactant>
    <interactant intactId="EBI-19944212">
        <id>A8MW99</id>
        <label>MEI4</label>
    </interactant>
    <organismsDiffer>false</organismsDiffer>
    <experiments>3</experiments>
</comment>
<comment type="interaction">
    <interactant intactId="EBI-10311409">
        <id>Q9NPG2</id>
    </interactant>
    <interactant intactId="EBI-740897">
        <id>Q9GZT8</id>
        <label>NIF3L1</label>
    </interactant>
    <organismsDiffer>false</organismsDiffer>
    <experiments>5</experiments>
</comment>
<comment type="interaction">
    <interactant intactId="EBI-10311409">
        <id>Q9NPG2</id>
    </interactant>
    <interactant intactId="EBI-307352">
        <id>Q04864</id>
        <label>REL</label>
    </interactant>
    <organismsDiffer>false</organismsDiffer>
    <experiments>3</experiments>
</comment>
<comment type="interaction">
    <interactant intactId="EBI-10311409">
        <id>Q9NPG2</id>
    </interactant>
    <interactant intactId="EBI-10829018">
        <id>Q04864-2</id>
        <label>REL</label>
    </interactant>
    <organismsDiffer>false</organismsDiffer>
    <experiments>3</experiments>
</comment>
<comment type="interaction">
    <interactant intactId="EBI-10311409">
        <id>Q9NPG2</id>
    </interactant>
    <interactant intactId="EBI-743494">
        <id>P48775</id>
        <label>TDO2</label>
    </interactant>
    <organismsDiffer>false</organismsDiffer>
    <experiments>6</experiments>
</comment>
<comment type="interaction">
    <interactant intactId="EBI-10311409">
        <id>Q9NPG2</id>
    </interactant>
    <interactant intactId="EBI-11139477">
        <id>Q96N21</id>
        <label>TEPSIN</label>
    </interactant>
    <organismsDiffer>false</organismsDiffer>
    <experiments>3</experiments>
</comment>
<comment type="interaction">
    <interactant intactId="EBI-10311409">
        <id>Q9NPG2</id>
    </interactant>
    <interactant intactId="EBI-2107455">
        <id>Q08AM6</id>
        <label>VAC14</label>
    </interactant>
    <organismsDiffer>false</organismsDiffer>
    <experiments>6</experiments>
</comment>
<comment type="interaction">
    <interactant intactId="EBI-10311409">
        <id>Q9NPG2</id>
    </interactant>
    <interactant intactId="EBI-625509">
        <id>Q8N720</id>
        <label>ZNF655</label>
    </interactant>
    <organismsDiffer>false</organismsDiffer>
    <experiments>3</experiments>
</comment>
<comment type="subcellular location">
    <subcellularLocation>
        <location evidence="1">Cytoplasm</location>
        <location evidence="1">Cytosol</location>
    </subcellularLocation>
    <subcellularLocation>
        <location evidence="1">Mitochondrion matrix</location>
    </subcellularLocation>
    <text evidence="1">Enriched in mitochondrial matrix upon oxygen-glucose deprivation.</text>
</comment>
<comment type="tissue specificity">
    <text evidence="3">Predominantly expressed in brain, the strongest expression is seen in the frontal lobe, the subthalamic nucleus and the thalamus.</text>
</comment>
<comment type="PTM">
    <text evidence="10">Phosphorylated during hypoxia by ERK1/ERK2. Phosphorylation regulates the heme pocket hexacoordination preventing the association of His-64 with the heme metal center. Thereby, promotes the access of dioxygen and nitrite to the heme and stimulates the nitrite reductase activity. Phosphorylation during hypoxia is stabilized by 14-3-3 proteins.</text>
</comment>
<comment type="PTM">
    <text evidence="7 9">An intramolecular Cys-46/Cys-55 disulfide bond, not necessarily present in orthologs, regulates the heme pocket hexacoordination preventing the association of His-64 with the heme metal center. Thereby, promotes the access of dioxygen and nitrite to the heme and stimulates the nitrite reductase activity.</text>
</comment>
<comment type="similarity">
    <text evidence="2">Belongs to the globin family.</text>
</comment>
<comment type="online information" name="Wikipedia">
    <link uri="https://en.wikipedia.org/wiki/Neuroglobin"/>
    <text>Neuroglobin entry</text>
</comment>
<dbReference type="EC" id="1.7.-.-" evidence="9"/>
<dbReference type="EMBL" id="AJ245944">
    <property type="protein sequence ID" value="CAC12994.1"/>
    <property type="molecule type" value="Genomic_DNA"/>
</dbReference>
<dbReference type="EMBL" id="AJ245946">
    <property type="protein sequence ID" value="CAC11133.1"/>
    <property type="molecule type" value="mRNA"/>
</dbReference>
<dbReference type="EMBL" id="AF422796">
    <property type="protein sequence ID" value="AAL98923.1"/>
    <property type="molecule type" value="Genomic_DNA"/>
</dbReference>
<dbReference type="EMBL" id="AF422797">
    <property type="protein sequence ID" value="AAL98924.1"/>
    <property type="molecule type" value="mRNA"/>
</dbReference>
<dbReference type="EMBL" id="AC007375">
    <property type="protein sequence ID" value="AAF63183.1"/>
    <property type="molecule type" value="Genomic_DNA"/>
</dbReference>
<dbReference type="EMBL" id="AC007954">
    <property type="protein sequence ID" value="AAF62557.1"/>
    <property type="molecule type" value="Genomic_DNA"/>
</dbReference>
<dbReference type="EMBL" id="BC032509">
    <property type="protein sequence ID" value="AAH32509.1"/>
    <property type="molecule type" value="mRNA"/>
</dbReference>
<dbReference type="CCDS" id="CCDS9856.1"/>
<dbReference type="RefSeq" id="NP_067080.1">
    <property type="nucleotide sequence ID" value="NM_021257.4"/>
</dbReference>
<dbReference type="PDB" id="1OJ6">
    <property type="method" value="X-ray"/>
    <property type="resolution" value="1.95 A"/>
    <property type="chains" value="A/B/C/D=1-151"/>
</dbReference>
<dbReference type="PDB" id="4MPM">
    <property type="method" value="X-ray"/>
    <property type="resolution" value="1.74 A"/>
    <property type="chains" value="A/B=1-151"/>
</dbReference>
<dbReference type="PDB" id="7VQG">
    <property type="method" value="X-ray"/>
    <property type="resolution" value="1.35 A"/>
    <property type="chains" value="A=2-149"/>
</dbReference>
<dbReference type="PDB" id="8GRZ">
    <property type="method" value="X-ray"/>
    <property type="resolution" value="2.00 A"/>
    <property type="chains" value="A=1-151"/>
</dbReference>
<dbReference type="PDB" id="8WUB">
    <property type="method" value="X-ray"/>
    <property type="resolution" value="1.50 A"/>
    <property type="chains" value="A/B/C=1-151"/>
</dbReference>
<dbReference type="PDBsum" id="1OJ6"/>
<dbReference type="PDBsum" id="4MPM"/>
<dbReference type="PDBsum" id="7VQG"/>
<dbReference type="PDBsum" id="8GRZ"/>
<dbReference type="PDBsum" id="8WUB"/>
<dbReference type="BMRB" id="Q9NPG2"/>
<dbReference type="SMR" id="Q9NPG2"/>
<dbReference type="BioGRID" id="121798">
    <property type="interactions" value="187"/>
</dbReference>
<dbReference type="FunCoup" id="Q9NPG2">
    <property type="interactions" value="73"/>
</dbReference>
<dbReference type="IntAct" id="Q9NPG2">
    <property type="interactions" value="17"/>
</dbReference>
<dbReference type="STRING" id="9606.ENSP00000298352"/>
<dbReference type="TCDB" id="1.A.107.1.4">
    <property type="family name" value="the pore-forming globin (globin) family"/>
</dbReference>
<dbReference type="GlyGen" id="Q9NPG2">
    <property type="glycosylation" value="1 site"/>
</dbReference>
<dbReference type="BioMuta" id="NGB"/>
<dbReference type="DMDM" id="32171399"/>
<dbReference type="MassIVE" id="Q9NPG2"/>
<dbReference type="PaxDb" id="9606-ENSP00000298352"/>
<dbReference type="PeptideAtlas" id="Q9NPG2"/>
<dbReference type="Antibodypedia" id="25998">
    <property type="antibodies" value="293 antibodies from 30 providers"/>
</dbReference>
<dbReference type="DNASU" id="58157"/>
<dbReference type="Ensembl" id="ENST00000298352.5">
    <property type="protein sequence ID" value="ENSP00000298352.4"/>
    <property type="gene ID" value="ENSG00000165553.5"/>
</dbReference>
<dbReference type="GeneID" id="58157"/>
<dbReference type="KEGG" id="hsa:58157"/>
<dbReference type="MANE-Select" id="ENST00000298352.5">
    <property type="protein sequence ID" value="ENSP00000298352.4"/>
    <property type="RefSeq nucleotide sequence ID" value="NM_021257.4"/>
    <property type="RefSeq protein sequence ID" value="NP_067080.1"/>
</dbReference>
<dbReference type="UCSC" id="uc001xtg.2">
    <property type="organism name" value="human"/>
</dbReference>
<dbReference type="AGR" id="HGNC:14077"/>
<dbReference type="CTD" id="58157"/>
<dbReference type="DisGeNET" id="58157"/>
<dbReference type="GeneCards" id="NGB"/>
<dbReference type="HGNC" id="HGNC:14077">
    <property type="gene designation" value="NGB"/>
</dbReference>
<dbReference type="HPA" id="ENSG00000165553">
    <property type="expression patterns" value="Tissue enriched (brain)"/>
</dbReference>
<dbReference type="MIM" id="605304">
    <property type="type" value="gene"/>
</dbReference>
<dbReference type="neXtProt" id="NX_Q9NPG2"/>
<dbReference type="OpenTargets" id="ENSG00000165553"/>
<dbReference type="PharmGKB" id="PA31612"/>
<dbReference type="VEuPathDB" id="HostDB:ENSG00000165553"/>
<dbReference type="eggNOG" id="KOG3378">
    <property type="taxonomic scope" value="Eukaryota"/>
</dbReference>
<dbReference type="GeneTree" id="ENSGT00510000048375"/>
<dbReference type="HOGENOM" id="CLU_003827_13_5_1"/>
<dbReference type="InParanoid" id="Q9NPG2"/>
<dbReference type="OMA" id="GRKLMAM"/>
<dbReference type="OrthoDB" id="436496at2759"/>
<dbReference type="PAN-GO" id="Q9NPG2">
    <property type="GO annotations" value="4 GO annotations based on evolutionary models"/>
</dbReference>
<dbReference type="PhylomeDB" id="Q9NPG2"/>
<dbReference type="TreeFam" id="TF333247"/>
<dbReference type="PathwayCommons" id="Q9NPG2"/>
<dbReference type="Reactome" id="R-HSA-8981607">
    <property type="pathway name" value="Intracellular oxygen transport"/>
</dbReference>
<dbReference type="SignaLink" id="Q9NPG2"/>
<dbReference type="BioGRID-ORCS" id="58157">
    <property type="hits" value="14 hits in 1147 CRISPR screens"/>
</dbReference>
<dbReference type="ChiTaRS" id="NGB">
    <property type="organism name" value="human"/>
</dbReference>
<dbReference type="EvolutionaryTrace" id="Q9NPG2"/>
<dbReference type="GenomeRNAi" id="58157"/>
<dbReference type="Pharos" id="Q9NPG2">
    <property type="development level" value="Tbio"/>
</dbReference>
<dbReference type="PRO" id="PR:Q9NPG2"/>
<dbReference type="Proteomes" id="UP000005640">
    <property type="component" value="Chromosome 14"/>
</dbReference>
<dbReference type="RNAct" id="Q9NPG2">
    <property type="molecule type" value="protein"/>
</dbReference>
<dbReference type="Bgee" id="ENSG00000165553">
    <property type="expression patterns" value="Expressed in right frontal lobe and 90 other cell types or tissues"/>
</dbReference>
<dbReference type="ExpressionAtlas" id="Q9NPG2">
    <property type="expression patterns" value="baseline and differential"/>
</dbReference>
<dbReference type="GO" id="GO:0005829">
    <property type="term" value="C:cytosol"/>
    <property type="evidence" value="ECO:0000304"/>
    <property type="project" value="Reactome"/>
</dbReference>
<dbReference type="GO" id="GO:0005759">
    <property type="term" value="C:mitochondrial matrix"/>
    <property type="evidence" value="ECO:0007669"/>
    <property type="project" value="UniProtKB-SubCell"/>
</dbReference>
<dbReference type="GO" id="GO:0005092">
    <property type="term" value="F:GDP-dissociation inhibitor activity"/>
    <property type="evidence" value="ECO:0000314"/>
    <property type="project" value="UniProtKB"/>
</dbReference>
<dbReference type="GO" id="GO:0020037">
    <property type="term" value="F:heme binding"/>
    <property type="evidence" value="ECO:0007669"/>
    <property type="project" value="InterPro"/>
</dbReference>
<dbReference type="GO" id="GO:0046872">
    <property type="term" value="F:metal ion binding"/>
    <property type="evidence" value="ECO:0007669"/>
    <property type="project" value="UniProtKB-KW"/>
</dbReference>
<dbReference type="GO" id="GO:0098809">
    <property type="term" value="F:nitrite reductase activity"/>
    <property type="evidence" value="ECO:0000314"/>
    <property type="project" value="UniProtKB"/>
</dbReference>
<dbReference type="GO" id="GO:0019825">
    <property type="term" value="F:oxygen binding"/>
    <property type="evidence" value="ECO:0000314"/>
    <property type="project" value="UniProtKB"/>
</dbReference>
<dbReference type="GO" id="GO:0005344">
    <property type="term" value="F:oxygen carrier activity"/>
    <property type="evidence" value="ECO:0000318"/>
    <property type="project" value="GO_Central"/>
</dbReference>
<dbReference type="GO" id="GO:0071456">
    <property type="term" value="P:cellular response to hypoxia"/>
    <property type="evidence" value="ECO:0000315"/>
    <property type="project" value="UniProtKB"/>
</dbReference>
<dbReference type="GO" id="GO:0015671">
    <property type="term" value="P:oxygen transport"/>
    <property type="evidence" value="ECO:0000318"/>
    <property type="project" value="GO_Central"/>
</dbReference>
<dbReference type="GO" id="GO:0001666">
    <property type="term" value="P:response to hypoxia"/>
    <property type="evidence" value="ECO:0000318"/>
    <property type="project" value="GO_Central"/>
</dbReference>
<dbReference type="CDD" id="cd08920">
    <property type="entry name" value="Ngb"/>
    <property type="match status" value="1"/>
</dbReference>
<dbReference type="FunFam" id="1.10.490.10:FF:000006">
    <property type="entry name" value="Neuroglobin"/>
    <property type="match status" value="1"/>
</dbReference>
<dbReference type="Gene3D" id="1.10.490.10">
    <property type="entry name" value="Globins"/>
    <property type="match status" value="1"/>
</dbReference>
<dbReference type="InterPro" id="IPR000971">
    <property type="entry name" value="Globin"/>
</dbReference>
<dbReference type="InterPro" id="IPR050532">
    <property type="entry name" value="Globin-like_OT"/>
</dbReference>
<dbReference type="InterPro" id="IPR009050">
    <property type="entry name" value="Globin-like_sf"/>
</dbReference>
<dbReference type="InterPro" id="IPR012292">
    <property type="entry name" value="Globin/Proto"/>
</dbReference>
<dbReference type="PANTHER" id="PTHR46458">
    <property type="entry name" value="BLR2807 PROTEIN"/>
    <property type="match status" value="1"/>
</dbReference>
<dbReference type="PANTHER" id="PTHR46458:SF19">
    <property type="entry name" value="NEUROGLOBIN"/>
    <property type="match status" value="1"/>
</dbReference>
<dbReference type="Pfam" id="PF00042">
    <property type="entry name" value="Globin"/>
    <property type="match status" value="1"/>
</dbReference>
<dbReference type="SUPFAM" id="SSF46458">
    <property type="entry name" value="Globin-like"/>
    <property type="match status" value="1"/>
</dbReference>
<dbReference type="PROSITE" id="PS01033">
    <property type="entry name" value="GLOBIN"/>
    <property type="match status" value="1"/>
</dbReference>
<name>NGB_HUMAN</name>
<protein>
    <recommendedName>
        <fullName evidence="12">Neuroglobin</fullName>
    </recommendedName>
    <alternativeName>
        <fullName evidence="13">Nitrite reductase</fullName>
        <ecNumber evidence="9">1.7.-.-</ecNumber>
    </alternativeName>
</protein>
<sequence length="151" mass="16933">MERPEPELIRQSWRAVSRSPLEHGTVLFARLFALEPDLLPLFQYNCRQFSSPEDCLSSPEFLDHIRKVMLVIDAAVTNVEDLSSLEEYLASLGRKHRAVGVKLSSFSTVGESLLYMLEKCLGPAFTPATRAAWSQLYGAVVQAMSRGWDGE</sequence>
<evidence type="ECO:0000250" key="1">
    <source>
        <dbReference type="UniProtKB" id="Q9ER97"/>
    </source>
</evidence>
<evidence type="ECO:0000255" key="2">
    <source>
        <dbReference type="PROSITE-ProRule" id="PRU00238"/>
    </source>
</evidence>
<evidence type="ECO:0000269" key="3">
    <source>
    </source>
</evidence>
<evidence type="ECO:0000269" key="4">
    <source>
    </source>
</evidence>
<evidence type="ECO:0000269" key="5">
    <source>
    </source>
</evidence>
<evidence type="ECO:0000269" key="6">
    <source>
    </source>
</evidence>
<evidence type="ECO:0000269" key="7">
    <source>
    </source>
</evidence>
<evidence type="ECO:0000269" key="8">
    <source>
    </source>
</evidence>
<evidence type="ECO:0000269" key="9">
    <source>
    </source>
</evidence>
<evidence type="ECO:0000269" key="10">
    <source>
    </source>
</evidence>
<evidence type="ECO:0000269" key="11">
    <source>
    </source>
</evidence>
<evidence type="ECO:0000303" key="12">
    <source>
    </source>
</evidence>
<evidence type="ECO:0000305" key="13">
    <source>
    </source>
</evidence>
<evidence type="ECO:0000312" key="14">
    <source>
        <dbReference type="HGNC" id="HGNC:14077"/>
    </source>
</evidence>
<evidence type="ECO:0007744" key="15">
    <source>
        <dbReference type="PDB" id="1OJ6"/>
    </source>
</evidence>
<evidence type="ECO:0007744" key="16">
    <source>
        <dbReference type="PDB" id="4MPM"/>
    </source>
</evidence>
<evidence type="ECO:0007829" key="17">
    <source>
        <dbReference type="PDB" id="7VQG"/>
    </source>
</evidence>
<accession>Q9NPG2</accession>
<gene>
    <name evidence="14" type="primary">NGB</name>
</gene>
<keyword id="KW-0002">3D-structure</keyword>
<keyword id="KW-0963">Cytoplasm</keyword>
<keyword id="KW-1015">Disulfide bond</keyword>
<keyword id="KW-0349">Heme</keyword>
<keyword id="KW-0408">Iron</keyword>
<keyword id="KW-0479">Metal-binding</keyword>
<keyword id="KW-0496">Mitochondrion</keyword>
<keyword id="KW-0560">Oxidoreductase</keyword>
<keyword id="KW-0597">Phosphoprotein</keyword>
<keyword id="KW-1267">Proteomics identification</keyword>
<keyword id="KW-1185">Reference proteome</keyword>
<proteinExistence type="evidence at protein level"/>
<organism>
    <name type="scientific">Homo sapiens</name>
    <name type="common">Human</name>
    <dbReference type="NCBI Taxonomy" id="9606"/>
    <lineage>
        <taxon>Eukaryota</taxon>
        <taxon>Metazoa</taxon>
        <taxon>Chordata</taxon>
        <taxon>Craniata</taxon>
        <taxon>Vertebrata</taxon>
        <taxon>Euteleostomi</taxon>
        <taxon>Mammalia</taxon>
        <taxon>Eutheria</taxon>
        <taxon>Euarchontoglires</taxon>
        <taxon>Primates</taxon>
        <taxon>Haplorrhini</taxon>
        <taxon>Catarrhini</taxon>
        <taxon>Hominidae</taxon>
        <taxon>Homo</taxon>
    </lineage>
</organism>
<reference key="1">
    <citation type="journal article" date="2000" name="Nature">
        <title>A vertebrate globin expressed in the brain.</title>
        <authorList>
            <person name="Burmester T."/>
            <person name="Weich B."/>
            <person name="Reinhardt S."/>
            <person name="Hankeln T."/>
        </authorList>
    </citation>
    <scope>NUCLEOTIDE SEQUENCE [GENOMIC DNA / MRNA]</scope>
    <scope>SUBUNIT</scope>
    <scope>TISSUE SPECIFICITY</scope>
    <source>
        <tissue>Brain</tissue>
    </source>
</reference>
<reference key="2">
    <citation type="journal article" date="2002" name="Biochem. Biophys. Res. Commun.">
        <title>Full-length cDNA cloning of human neuroglobin and tissue expression of rat neuroglobin.</title>
        <authorList>
            <person name="Zhang C.G."/>
            <person name="Wang C.L."/>
            <person name="Deng M.Y."/>
            <person name="Li L."/>
            <person name="Wang H.Y."/>
            <person name="Fan M."/>
            <person name="Xu W.L."/>
            <person name="Meng F.W."/>
            <person name="Qian L."/>
            <person name="He F.C."/>
        </authorList>
    </citation>
    <scope>NUCLEOTIDE SEQUENCE [MRNA]</scope>
</reference>
<reference key="3">
    <citation type="journal article" date="2003" name="Nature">
        <title>The DNA sequence and analysis of human chromosome 14.</title>
        <authorList>
            <person name="Heilig R."/>
            <person name="Eckenberg R."/>
            <person name="Petit J.-L."/>
            <person name="Fonknechten N."/>
            <person name="Da Silva C."/>
            <person name="Cattolico L."/>
            <person name="Levy M."/>
            <person name="Barbe V."/>
            <person name="De Berardinis V."/>
            <person name="Ureta-Vidal A."/>
            <person name="Pelletier E."/>
            <person name="Vico V."/>
            <person name="Anthouard V."/>
            <person name="Rowen L."/>
            <person name="Madan A."/>
            <person name="Qin S."/>
            <person name="Sun H."/>
            <person name="Du H."/>
            <person name="Pepin K."/>
            <person name="Artiguenave F."/>
            <person name="Robert C."/>
            <person name="Cruaud C."/>
            <person name="Bruels T."/>
            <person name="Jaillon O."/>
            <person name="Friedlander L."/>
            <person name="Samson G."/>
            <person name="Brottier P."/>
            <person name="Cure S."/>
            <person name="Segurens B."/>
            <person name="Aniere F."/>
            <person name="Samain S."/>
            <person name="Crespeau H."/>
            <person name="Abbasi N."/>
            <person name="Aiach N."/>
            <person name="Boscus D."/>
            <person name="Dickhoff R."/>
            <person name="Dors M."/>
            <person name="Dubois I."/>
            <person name="Friedman C."/>
            <person name="Gouyvenoux M."/>
            <person name="James R."/>
            <person name="Madan A."/>
            <person name="Mairey-Estrada B."/>
            <person name="Mangenot S."/>
            <person name="Martins N."/>
            <person name="Menard M."/>
            <person name="Oztas S."/>
            <person name="Ratcliffe A."/>
            <person name="Shaffer T."/>
            <person name="Trask B."/>
            <person name="Vacherie B."/>
            <person name="Bellemere C."/>
            <person name="Belser C."/>
            <person name="Besnard-Gonnet M."/>
            <person name="Bartol-Mavel D."/>
            <person name="Boutard M."/>
            <person name="Briez-Silla S."/>
            <person name="Combette S."/>
            <person name="Dufosse-Laurent V."/>
            <person name="Ferron C."/>
            <person name="Lechaplais C."/>
            <person name="Louesse C."/>
            <person name="Muselet D."/>
            <person name="Magdelenat G."/>
            <person name="Pateau E."/>
            <person name="Petit E."/>
            <person name="Sirvain-Trukniewicz P."/>
            <person name="Trybou A."/>
            <person name="Vega-Czarny N."/>
            <person name="Bataille E."/>
            <person name="Bluet E."/>
            <person name="Bordelais I."/>
            <person name="Dubois M."/>
            <person name="Dumont C."/>
            <person name="Guerin T."/>
            <person name="Haffray S."/>
            <person name="Hammadi R."/>
            <person name="Muanga J."/>
            <person name="Pellouin V."/>
            <person name="Robert D."/>
            <person name="Wunderle E."/>
            <person name="Gauguet G."/>
            <person name="Roy A."/>
            <person name="Sainte-Marthe L."/>
            <person name="Verdier J."/>
            <person name="Verdier-Discala C."/>
            <person name="Hillier L.W."/>
            <person name="Fulton L."/>
            <person name="McPherson J."/>
            <person name="Matsuda F."/>
            <person name="Wilson R."/>
            <person name="Scarpelli C."/>
            <person name="Gyapay G."/>
            <person name="Wincker P."/>
            <person name="Saurin W."/>
            <person name="Quetier F."/>
            <person name="Waterston R."/>
            <person name="Hood L."/>
            <person name="Weissenbach J."/>
        </authorList>
    </citation>
    <scope>NUCLEOTIDE SEQUENCE [LARGE SCALE GENOMIC DNA]</scope>
</reference>
<reference key="4">
    <citation type="journal article" date="2004" name="Genome Res.">
        <title>The status, quality, and expansion of the NIH full-length cDNA project: the Mammalian Gene Collection (MGC).</title>
        <authorList>
            <consortium name="The MGC Project Team"/>
        </authorList>
    </citation>
    <scope>NUCLEOTIDE SEQUENCE [LARGE SCALE MRNA]</scope>
    <source>
        <tissue>Brain</tissue>
    </source>
</reference>
<reference key="5">
    <citation type="journal article" date="2001" name="J. Biol. Chem.">
        <title>Biochemical characterization and ligand binding properties of neuroglobin, a novel member of the globin family.</title>
        <authorList>
            <person name="Dewilde S."/>
            <person name="Kiger L."/>
            <person name="Burmester T."/>
            <person name="Hankeln T."/>
            <person name="Baudin-Creuza V."/>
            <person name="Aerts T."/>
            <person name="Marden M.C."/>
            <person name="Caubergs R."/>
            <person name="Moens L."/>
        </authorList>
    </citation>
    <scope>FUNCTION</scope>
</reference>
<reference key="6">
    <citation type="journal article" date="2003" name="J. Biol. Chem.">
        <title>Oxidized human neuroglobin acts as a heterotrimeric Galpha protein guanine nucleotide dissociation inhibitor.</title>
        <authorList>
            <person name="Wakasugi K."/>
            <person name="Nakano T."/>
            <person name="Morishima I."/>
        </authorList>
    </citation>
    <scope>FUNCTION</scope>
    <scope>MUTAGENESIS OF CYS-46; CYS-55 AND CYS-120</scope>
    <scope>DISULFIDE BOND</scope>
</reference>
<reference key="7">
    <citation type="journal article" date="2004" name="Micron">
        <title>Coupling of the heme and an internal disulfide bond in human neuroglobin.</title>
        <authorList>
            <person name="Hamdane D."/>
            <person name="Kiger L."/>
            <person name="Dewilde S."/>
            <person name="Green B.N."/>
            <person name="Pesce A."/>
            <person name="Uzan J."/>
            <person name="Burmester T."/>
            <person name="Hankeln T."/>
            <person name="Bolognesi M."/>
            <person name="Moens L."/>
            <person name="Marden M.C."/>
        </authorList>
    </citation>
    <scope>DISULFIDE BOND</scope>
</reference>
<reference key="8">
    <citation type="journal article" date="2008" name="Biochem. Biophys. Res. Commun.">
        <title>Neuroprotective function of human neuroglobin is correlated with its guanine nucleotide dissociation inhibitor activity.</title>
        <authorList>
            <person name="Watanabe S."/>
            <person name="Wakasugi K."/>
        </authorList>
    </citation>
    <scope>FUNCTION</scope>
</reference>
<reference key="9">
    <citation type="journal article" date="2011" name="J. Biol. Chem.">
        <title>Human neuroglobin functions as a redox-regulated nitrite reductase.</title>
        <authorList>
            <person name="Tiso M."/>
            <person name="Tejero J."/>
            <person name="Basu S."/>
            <person name="Azarov I."/>
            <person name="Wang X."/>
            <person name="Simplaceanu V."/>
            <person name="Frizzell S."/>
            <person name="Jayaraman T."/>
            <person name="Geary L."/>
            <person name="Shapiro C."/>
            <person name="Ho C."/>
            <person name="Shiva S."/>
            <person name="Kim-Shapiro D.B."/>
            <person name="Gladwin M.T."/>
        </authorList>
    </citation>
    <scope>FUNCTION</scope>
    <scope>CATALYTIC ACTIVITY</scope>
    <scope>DISULFIDE BOND</scope>
    <scope>MUTAGENESIS OF CYS-46; CYS-55 AND HIS-64</scope>
</reference>
<reference key="10">
    <citation type="journal article" date="2011" name="J. Biol. Chem.">
        <title>14-3-3 binding and phosphorylation of neuroglobin during hypoxia modulate six-to-five heme pocket coordination and rate of nitrite reduction to nitric oxide.</title>
        <authorList>
            <person name="Jayaraman T."/>
            <person name="Tejero J."/>
            <person name="Chen B.B."/>
            <person name="Blood A.B."/>
            <person name="Frizzell S."/>
            <person name="Shapiro C."/>
            <person name="Tiso M."/>
            <person name="Hood B.L."/>
            <person name="Wang X."/>
            <person name="Zhao X."/>
            <person name="Conrads T.P."/>
            <person name="Mallampalli R.K."/>
            <person name="Gladwin M.T."/>
        </authorList>
    </citation>
    <scope>PHOSPHORYLATION</scope>
    <scope>INTERACTION WITH 14-3-3 PROTEINS</scope>
    <scope>MUTAGENESIS OF SER-17 AND SER-50</scope>
</reference>
<reference evidence="15" key="11">
    <citation type="journal article" date="2003" name="Structure">
        <title>Human brain neuroglobin structure reveals a distinct mode of controlling oxygen affinity.</title>
        <authorList>
            <person name="Pesce A."/>
            <person name="Dewilde S."/>
            <person name="Nardini M."/>
            <person name="Moens L."/>
            <person name="Ascenzi P."/>
            <person name="Hankeln T."/>
            <person name="Burmester T."/>
            <person name="Bolognesi M."/>
        </authorList>
    </citation>
    <scope>X-RAY CRYSTALLOGRAPHY (1.95 ANGSTROMS) IN COMPLEX WITH HEME B IN A HEXACOORDINATED FE(3+)-BOUND FORM</scope>
    <scope>FUNCTION</scope>
</reference>
<reference evidence="16" key="12">
    <citation type="journal article" date="2014" name="Acta Crystallogr.">
        <title>The crystal structure of wild-type human brain neuroglobin reveals flexibility of the disulfide bond that regulates oxygen affinity.</title>
        <authorList>
            <person name="Guimaraes B.G."/>
            <person name="Hamdane D."/>
            <person name="Lechauve C."/>
            <person name="Marden M.C."/>
            <person name="Golinelli-Pimpaneau B."/>
        </authorList>
    </citation>
    <scope>X-RAY CRYSTALLOGRAPHY (1.74 ANGSTROMS) IN COMPLEX WITH HEME B</scope>
    <scope>DISULFIDE BONDS</scope>
    <scope>FUNCTION</scope>
</reference>